<feature type="chain" id="PRO_0000396069" description="Putative F-box/kelch-repeat protein At1g19930">
    <location>
        <begin position="1"/>
        <end position="344"/>
    </location>
</feature>
<feature type="domain" description="F-box" evidence="1">
    <location>
        <begin position="8"/>
        <end position="54"/>
    </location>
</feature>
<feature type="repeat" description="Kelch 1">
    <location>
        <begin position="122"/>
        <end position="168"/>
    </location>
</feature>
<feature type="repeat" description="Kelch 2">
    <location>
        <begin position="170"/>
        <end position="195"/>
    </location>
</feature>
<feature type="repeat" description="Kelch 3">
    <location>
        <begin position="196"/>
        <end position="241"/>
    </location>
</feature>
<feature type="repeat" description="Kelch 4">
    <location>
        <begin position="243"/>
        <end position="276"/>
    </location>
</feature>
<accession>Q3ED92</accession>
<protein>
    <recommendedName>
        <fullName>Putative F-box/kelch-repeat protein At1g19930</fullName>
    </recommendedName>
</protein>
<dbReference type="EMBL" id="AC007797">
    <property type="status" value="NOT_ANNOTATED_CDS"/>
    <property type="molecule type" value="Genomic_DNA"/>
</dbReference>
<dbReference type="EMBL" id="CP002684">
    <property type="protein sequence ID" value="AEE29914.1"/>
    <property type="molecule type" value="Genomic_DNA"/>
</dbReference>
<dbReference type="RefSeq" id="NP_173422.1">
    <property type="nucleotide sequence ID" value="NM_101848.1"/>
</dbReference>
<dbReference type="SMR" id="Q3ED92"/>
<dbReference type="FunCoup" id="Q3ED92">
    <property type="interactions" value="2"/>
</dbReference>
<dbReference type="STRING" id="3702.Q3ED92"/>
<dbReference type="PaxDb" id="3702-AT1G19930.1"/>
<dbReference type="EnsemblPlants" id="AT1G19930.1">
    <property type="protein sequence ID" value="AT1G19930.1"/>
    <property type="gene ID" value="AT1G19930"/>
</dbReference>
<dbReference type="GeneID" id="838582"/>
<dbReference type="Gramene" id="AT1G19930.1">
    <property type="protein sequence ID" value="AT1G19930.1"/>
    <property type="gene ID" value="AT1G19930"/>
</dbReference>
<dbReference type="KEGG" id="ath:AT1G19930"/>
<dbReference type="Araport" id="AT1G19930"/>
<dbReference type="TAIR" id="AT1G19930"/>
<dbReference type="eggNOG" id="KOG1072">
    <property type="taxonomic scope" value="Eukaryota"/>
</dbReference>
<dbReference type="HOGENOM" id="CLU_032521_1_2_1"/>
<dbReference type="InParanoid" id="Q3ED92"/>
<dbReference type="OMA" id="YDHISAS"/>
<dbReference type="PhylomeDB" id="Q3ED92"/>
<dbReference type="PRO" id="PR:Q3ED92"/>
<dbReference type="Proteomes" id="UP000006548">
    <property type="component" value="Chromosome 1"/>
</dbReference>
<dbReference type="ExpressionAtlas" id="Q3ED92">
    <property type="expression patterns" value="differential"/>
</dbReference>
<dbReference type="CDD" id="cd22152">
    <property type="entry name" value="F-box_AtAFR-like"/>
    <property type="match status" value="1"/>
</dbReference>
<dbReference type="Gene3D" id="2.120.10.80">
    <property type="entry name" value="Kelch-type beta propeller"/>
    <property type="match status" value="1"/>
</dbReference>
<dbReference type="InterPro" id="IPR036047">
    <property type="entry name" value="F-box-like_dom_sf"/>
</dbReference>
<dbReference type="InterPro" id="IPR050354">
    <property type="entry name" value="F-box/kelch-repeat_ARATH"/>
</dbReference>
<dbReference type="InterPro" id="IPR001810">
    <property type="entry name" value="F-box_dom"/>
</dbReference>
<dbReference type="InterPro" id="IPR015915">
    <property type="entry name" value="Kelch-typ_b-propeller"/>
</dbReference>
<dbReference type="PANTHER" id="PTHR24414">
    <property type="entry name" value="F-BOX/KELCH-REPEAT PROTEIN SKIP4"/>
    <property type="match status" value="1"/>
</dbReference>
<dbReference type="PANTHER" id="PTHR24414:SF184">
    <property type="entry name" value="GALACTOSE OXIDASE_KELCH REPEAT SUPERFAMILY PROTEIN"/>
    <property type="match status" value="1"/>
</dbReference>
<dbReference type="Pfam" id="PF00646">
    <property type="entry name" value="F-box"/>
    <property type="match status" value="1"/>
</dbReference>
<dbReference type="Pfam" id="PF25210">
    <property type="entry name" value="Kelch_FKB95"/>
    <property type="match status" value="2"/>
</dbReference>
<dbReference type="SMART" id="SM00256">
    <property type="entry name" value="FBOX"/>
    <property type="match status" value="1"/>
</dbReference>
<dbReference type="SUPFAM" id="SSF81383">
    <property type="entry name" value="F-box domain"/>
    <property type="match status" value="1"/>
</dbReference>
<dbReference type="SUPFAM" id="SSF117281">
    <property type="entry name" value="Kelch motif"/>
    <property type="match status" value="1"/>
</dbReference>
<dbReference type="PROSITE" id="PS50181">
    <property type="entry name" value="FBOX"/>
    <property type="match status" value="1"/>
</dbReference>
<reference key="1">
    <citation type="journal article" date="2000" name="Nature">
        <title>Sequence and analysis of chromosome 1 of the plant Arabidopsis thaliana.</title>
        <authorList>
            <person name="Theologis A."/>
            <person name="Ecker J.R."/>
            <person name="Palm C.J."/>
            <person name="Federspiel N.A."/>
            <person name="Kaul S."/>
            <person name="White O."/>
            <person name="Alonso J."/>
            <person name="Altafi H."/>
            <person name="Araujo R."/>
            <person name="Bowman C.L."/>
            <person name="Brooks S.Y."/>
            <person name="Buehler E."/>
            <person name="Chan A."/>
            <person name="Chao Q."/>
            <person name="Chen H."/>
            <person name="Cheuk R.F."/>
            <person name="Chin C.W."/>
            <person name="Chung M.K."/>
            <person name="Conn L."/>
            <person name="Conway A.B."/>
            <person name="Conway A.R."/>
            <person name="Creasy T.H."/>
            <person name="Dewar K."/>
            <person name="Dunn P."/>
            <person name="Etgu P."/>
            <person name="Feldblyum T.V."/>
            <person name="Feng J.-D."/>
            <person name="Fong B."/>
            <person name="Fujii C.Y."/>
            <person name="Gill J.E."/>
            <person name="Goldsmith A.D."/>
            <person name="Haas B."/>
            <person name="Hansen N.F."/>
            <person name="Hughes B."/>
            <person name="Huizar L."/>
            <person name="Hunter J.L."/>
            <person name="Jenkins J."/>
            <person name="Johnson-Hopson C."/>
            <person name="Khan S."/>
            <person name="Khaykin E."/>
            <person name="Kim C.J."/>
            <person name="Koo H.L."/>
            <person name="Kremenetskaia I."/>
            <person name="Kurtz D.B."/>
            <person name="Kwan A."/>
            <person name="Lam B."/>
            <person name="Langin-Hooper S."/>
            <person name="Lee A."/>
            <person name="Lee J.M."/>
            <person name="Lenz C.A."/>
            <person name="Li J.H."/>
            <person name="Li Y.-P."/>
            <person name="Lin X."/>
            <person name="Liu S.X."/>
            <person name="Liu Z.A."/>
            <person name="Luros J.S."/>
            <person name="Maiti R."/>
            <person name="Marziali A."/>
            <person name="Militscher J."/>
            <person name="Miranda M."/>
            <person name="Nguyen M."/>
            <person name="Nierman W.C."/>
            <person name="Osborne B.I."/>
            <person name="Pai G."/>
            <person name="Peterson J."/>
            <person name="Pham P.K."/>
            <person name="Rizzo M."/>
            <person name="Rooney T."/>
            <person name="Rowley D."/>
            <person name="Sakano H."/>
            <person name="Salzberg S.L."/>
            <person name="Schwartz J.R."/>
            <person name="Shinn P."/>
            <person name="Southwick A.M."/>
            <person name="Sun H."/>
            <person name="Tallon L.J."/>
            <person name="Tambunga G."/>
            <person name="Toriumi M.J."/>
            <person name="Town C.D."/>
            <person name="Utterback T."/>
            <person name="Van Aken S."/>
            <person name="Vaysberg M."/>
            <person name="Vysotskaia V.S."/>
            <person name="Walker M."/>
            <person name="Wu D."/>
            <person name="Yu G."/>
            <person name="Fraser C.M."/>
            <person name="Venter J.C."/>
            <person name="Davis R.W."/>
        </authorList>
    </citation>
    <scope>NUCLEOTIDE SEQUENCE [LARGE SCALE GENOMIC DNA]</scope>
    <source>
        <strain>cv. Columbia</strain>
    </source>
</reference>
<reference key="2">
    <citation type="journal article" date="2017" name="Plant J.">
        <title>Araport11: a complete reannotation of the Arabidopsis thaliana reference genome.</title>
        <authorList>
            <person name="Cheng C.Y."/>
            <person name="Krishnakumar V."/>
            <person name="Chan A.P."/>
            <person name="Thibaud-Nissen F."/>
            <person name="Schobel S."/>
            <person name="Town C.D."/>
        </authorList>
    </citation>
    <scope>GENOME REANNOTATION</scope>
    <source>
        <strain>cv. Columbia</strain>
    </source>
</reference>
<proteinExistence type="predicted"/>
<evidence type="ECO:0000255" key="1">
    <source>
        <dbReference type="PROSITE-ProRule" id="PRU00080"/>
    </source>
</evidence>
<sequence>MKKNKVPTELIFSLPNDLLVNILARVSRLDYPILSLVSKRFSSVLTLPELYQTRSLVGLTENCLYVCLLSSRADRIPSWFKLCRRPILASDTRKSSGYVLATIPIPHSPPLHRSSLVAVGSNIYNIGGSISQSQSSSVSILDCWSHTWLEGPSMQVEREYPSASLLDGKIYVTGGCRLTFHGCGDQTDNVVVDGKLHSCGGYKGVAYNPNDGRWDSLGSEMNLGLKWSSSCVIENVIYYYYHNENIKWYDTKVRSWRTLNGLKTLPRFARYANVRLADYGGKMALFWDKFTGCGNQNRMIWCAIIALERRNNEEIWGNVEWSDAVLPHQVPMAYVCEYVVAVNV</sequence>
<gene>
    <name type="ordered locus">At1g19930</name>
    <name type="ORF">F6F9.32</name>
</gene>
<name>FK127_ARATH</name>
<keyword id="KW-0880">Kelch repeat</keyword>
<keyword id="KW-1185">Reference proteome</keyword>
<keyword id="KW-0677">Repeat</keyword>
<organism>
    <name type="scientific">Arabidopsis thaliana</name>
    <name type="common">Mouse-ear cress</name>
    <dbReference type="NCBI Taxonomy" id="3702"/>
    <lineage>
        <taxon>Eukaryota</taxon>
        <taxon>Viridiplantae</taxon>
        <taxon>Streptophyta</taxon>
        <taxon>Embryophyta</taxon>
        <taxon>Tracheophyta</taxon>
        <taxon>Spermatophyta</taxon>
        <taxon>Magnoliopsida</taxon>
        <taxon>eudicotyledons</taxon>
        <taxon>Gunneridae</taxon>
        <taxon>Pentapetalae</taxon>
        <taxon>rosids</taxon>
        <taxon>malvids</taxon>
        <taxon>Brassicales</taxon>
        <taxon>Brassicaceae</taxon>
        <taxon>Camelineae</taxon>
        <taxon>Arabidopsis</taxon>
    </lineage>
</organism>